<accession>P50278</accession>
<accession>D6W1K9</accession>
<keyword id="KW-0963">Cytoplasm</keyword>
<keyword id="KW-0539">Nucleus</keyword>
<keyword id="KW-0597">Phosphoprotein</keyword>
<keyword id="KW-1185">Reference proteome</keyword>
<proteinExistence type="evidence at protein level"/>
<gene>
    <name type="primary">SOL1</name>
    <name type="ordered locus">YNR034W</name>
    <name type="ORF">N3291</name>
</gene>
<feature type="chain" id="PRO_0000090082" description="6-phosphogluconolactonase-like protein 1">
    <location>
        <begin position="1"/>
        <end position="321"/>
    </location>
</feature>
<feature type="region of interest" description="Disordered" evidence="1">
    <location>
        <begin position="36"/>
        <end position="85"/>
    </location>
</feature>
<feature type="compositionally biased region" description="Polar residues" evidence="1">
    <location>
        <begin position="39"/>
        <end position="57"/>
    </location>
</feature>
<feature type="compositionally biased region" description="Low complexity" evidence="1">
    <location>
        <begin position="63"/>
        <end position="74"/>
    </location>
</feature>
<feature type="compositionally biased region" description="Basic and acidic residues" evidence="1">
    <location>
        <begin position="75"/>
        <end position="85"/>
    </location>
</feature>
<feature type="modified residue" description="Phosphoserine" evidence="6">
    <location>
        <position position="65"/>
    </location>
</feature>
<feature type="modified residue" description="Phosphoserine" evidence="6">
    <location>
        <position position="68"/>
    </location>
</feature>
<feature type="modified residue" description="Phosphothreonine" evidence="5 7 8 9">
    <location>
        <position position="320"/>
    </location>
</feature>
<organism>
    <name type="scientific">Saccharomyces cerevisiae (strain ATCC 204508 / S288c)</name>
    <name type="common">Baker's yeast</name>
    <dbReference type="NCBI Taxonomy" id="559292"/>
    <lineage>
        <taxon>Eukaryota</taxon>
        <taxon>Fungi</taxon>
        <taxon>Dikarya</taxon>
        <taxon>Ascomycota</taxon>
        <taxon>Saccharomycotina</taxon>
        <taxon>Saccharomycetes</taxon>
        <taxon>Saccharomycetales</taxon>
        <taxon>Saccharomycetaceae</taxon>
        <taxon>Saccharomyces</taxon>
    </lineage>
</organism>
<name>SOL1_YEAST</name>
<evidence type="ECO:0000256" key="1">
    <source>
        <dbReference type="SAM" id="MobiDB-lite"/>
    </source>
</evidence>
<evidence type="ECO:0000269" key="2">
    <source>
    </source>
</evidence>
<evidence type="ECO:0000269" key="3">
    <source>
    </source>
</evidence>
<evidence type="ECO:0000305" key="4"/>
<evidence type="ECO:0007744" key="5">
    <source>
    </source>
</evidence>
<evidence type="ECO:0007744" key="6">
    <source>
    </source>
</evidence>
<evidence type="ECO:0007744" key="7">
    <source>
    </source>
</evidence>
<evidence type="ECO:0007744" key="8">
    <source>
    </source>
</evidence>
<evidence type="ECO:0007744" key="9">
    <source>
    </source>
</evidence>
<reference key="1">
    <citation type="journal article" date="1996" name="Genetics">
        <title>Los1p, involved in yeast pre-tRNA splicing, positively regulates members of the SOL gene family.</title>
        <authorList>
            <person name="Shen W.-C."/>
            <person name="Stanford D.R."/>
            <person name="Hopper A.K."/>
        </authorList>
    </citation>
    <scope>NUCLEOTIDE SEQUENCE [GENOMIC DNA]</scope>
</reference>
<reference key="2">
    <citation type="journal article" date="1997" name="Nature">
        <title>The nucleotide sequence of Saccharomyces cerevisiae chromosome XIV and its evolutionary implications.</title>
        <authorList>
            <person name="Philippsen P."/>
            <person name="Kleine K."/>
            <person name="Poehlmann R."/>
            <person name="Duesterhoeft A."/>
            <person name="Hamberg K."/>
            <person name="Hegemann J.H."/>
            <person name="Obermaier B."/>
            <person name="Urrestarazu L.A."/>
            <person name="Aert R."/>
            <person name="Albermann K."/>
            <person name="Altmann R."/>
            <person name="Andre B."/>
            <person name="Baladron V."/>
            <person name="Ballesta J.P.G."/>
            <person name="Becam A.-M."/>
            <person name="Beinhauer J.D."/>
            <person name="Boskovic J."/>
            <person name="Buitrago M.J."/>
            <person name="Bussereau F."/>
            <person name="Coster F."/>
            <person name="Crouzet M."/>
            <person name="D'Angelo M."/>
            <person name="Dal Pero F."/>
            <person name="De Antoni A."/>
            <person name="del Rey F."/>
            <person name="Doignon F."/>
            <person name="Domdey H."/>
            <person name="Dubois E."/>
            <person name="Fiedler T.A."/>
            <person name="Fleig U."/>
            <person name="Floeth M."/>
            <person name="Fritz C."/>
            <person name="Gaillardin C."/>
            <person name="Garcia-Cantalejo J.M."/>
            <person name="Glansdorff N."/>
            <person name="Goffeau A."/>
            <person name="Gueldener U."/>
            <person name="Herbert C.J."/>
            <person name="Heumann K."/>
            <person name="Heuss-Neitzel D."/>
            <person name="Hilbert H."/>
            <person name="Hinni K."/>
            <person name="Iraqui Houssaini I."/>
            <person name="Jacquet M."/>
            <person name="Jimenez A."/>
            <person name="Jonniaux J.-L."/>
            <person name="Karpfinger-Hartl L."/>
            <person name="Lanfranchi G."/>
            <person name="Lepingle A."/>
            <person name="Levesque H."/>
            <person name="Lyck R."/>
            <person name="Maftahi M."/>
            <person name="Mallet L."/>
            <person name="Maurer C.T.C."/>
            <person name="Messenguy F."/>
            <person name="Mewes H.-W."/>
            <person name="Moestl D."/>
            <person name="Nasr F."/>
            <person name="Nicaud J.-M."/>
            <person name="Niedenthal R.K."/>
            <person name="Pandolfo D."/>
            <person name="Pierard A."/>
            <person name="Piravandi E."/>
            <person name="Planta R.J."/>
            <person name="Pohl T.M."/>
            <person name="Purnelle B."/>
            <person name="Rebischung C."/>
            <person name="Remacha M.A."/>
            <person name="Revuelta J.L."/>
            <person name="Rinke M."/>
            <person name="Saiz J.E."/>
            <person name="Sartorello F."/>
            <person name="Scherens B."/>
            <person name="Sen-Gupta M."/>
            <person name="Soler-Mira A."/>
            <person name="Urbanus J.H.M."/>
            <person name="Valle G."/>
            <person name="Van Dyck L."/>
            <person name="Verhasselt P."/>
            <person name="Vierendeels F."/>
            <person name="Vissers S."/>
            <person name="Voet M."/>
            <person name="Volckaert G."/>
            <person name="Wach A."/>
            <person name="Wambutt R."/>
            <person name="Wedler H."/>
            <person name="Zollner A."/>
            <person name="Hani J."/>
        </authorList>
    </citation>
    <scope>NUCLEOTIDE SEQUENCE [LARGE SCALE GENOMIC DNA]</scope>
    <source>
        <strain>ATCC 204508 / S288c</strain>
    </source>
</reference>
<reference key="3">
    <citation type="journal article" date="2014" name="G3 (Bethesda)">
        <title>The reference genome sequence of Saccharomyces cerevisiae: Then and now.</title>
        <authorList>
            <person name="Engel S.R."/>
            <person name="Dietrich F.S."/>
            <person name="Fisk D.G."/>
            <person name="Binkley G."/>
            <person name="Balakrishnan R."/>
            <person name="Costanzo M.C."/>
            <person name="Dwight S.S."/>
            <person name="Hitz B.C."/>
            <person name="Karra K."/>
            <person name="Nash R.S."/>
            <person name="Weng S."/>
            <person name="Wong E.D."/>
            <person name="Lloyd P."/>
            <person name="Skrzypek M.S."/>
            <person name="Miyasato S.R."/>
            <person name="Simison M."/>
            <person name="Cherry J.M."/>
        </authorList>
    </citation>
    <scope>GENOME REANNOTATION</scope>
    <source>
        <strain>ATCC 204508 / S288c</strain>
    </source>
</reference>
<reference key="4">
    <citation type="journal article" date="2003" name="Nature">
        <title>Global analysis of protein localization in budding yeast.</title>
        <authorList>
            <person name="Huh W.-K."/>
            <person name="Falvo J.V."/>
            <person name="Gerke L.C."/>
            <person name="Carroll A.S."/>
            <person name="Howson R.W."/>
            <person name="Weissman J.S."/>
            <person name="O'Shea E.K."/>
        </authorList>
    </citation>
    <scope>SUBCELLULAR LOCATION [LARGE SCALE ANALYSIS]</scope>
</reference>
<reference key="5">
    <citation type="journal article" date="2003" name="Nature">
        <title>Global analysis of protein expression in yeast.</title>
        <authorList>
            <person name="Ghaemmaghami S."/>
            <person name="Huh W.-K."/>
            <person name="Bower K."/>
            <person name="Howson R.W."/>
            <person name="Belle A."/>
            <person name="Dephoure N."/>
            <person name="O'Shea E.K."/>
            <person name="Weissman J.S."/>
        </authorList>
    </citation>
    <scope>LEVEL OF PROTEIN EXPRESSION [LARGE SCALE ANALYSIS]</scope>
</reference>
<reference key="6">
    <citation type="journal article" date="2004" name="Genetics">
        <title>Division of labor among the yeast Sol proteins implicated in tRNA nuclear export and carbohydrate metabolism.</title>
        <authorList>
            <person name="Stanford D.R."/>
            <person name="Whitney M.L."/>
            <person name="Hurto R.L."/>
            <person name="Eisaman D.M."/>
            <person name="Shen W.-C."/>
            <person name="Hopper A.K."/>
        </authorList>
    </citation>
    <scope>FUNCTION</scope>
    <scope>LACK OF ENZYME ACTIVITY</scope>
    <scope>SUBCELLULAR LOCATION</scope>
</reference>
<reference key="7">
    <citation type="journal article" date="2005" name="Mol. Cell. Proteomics">
        <title>Quantitative phosphoproteomics applied to the yeast pheromone signaling pathway.</title>
        <authorList>
            <person name="Gruhler A."/>
            <person name="Olsen J.V."/>
            <person name="Mohammed S."/>
            <person name="Mortensen P."/>
            <person name="Faergeman N.J."/>
            <person name="Mann M."/>
            <person name="Jensen O.N."/>
        </authorList>
    </citation>
    <scope>PHOSPHORYLATION [LARGE SCALE ANALYSIS] AT THR-320</scope>
    <scope>IDENTIFICATION BY MASS SPECTROMETRY [LARGE SCALE ANALYSIS]</scope>
    <source>
        <strain>YAL6B</strain>
    </source>
</reference>
<reference key="8">
    <citation type="journal article" date="2007" name="J. Proteome Res.">
        <title>Large-scale phosphorylation analysis of alpha-factor-arrested Saccharomyces cerevisiae.</title>
        <authorList>
            <person name="Li X."/>
            <person name="Gerber S.A."/>
            <person name="Rudner A.D."/>
            <person name="Beausoleil S.A."/>
            <person name="Haas W."/>
            <person name="Villen J."/>
            <person name="Elias J.E."/>
            <person name="Gygi S.P."/>
        </authorList>
    </citation>
    <scope>PHOSPHORYLATION [LARGE SCALE ANALYSIS] AT THR-320</scope>
    <scope>IDENTIFICATION BY MASS SPECTROMETRY [LARGE SCALE ANALYSIS]</scope>
    <source>
        <strain>ADR376</strain>
    </source>
</reference>
<reference key="9">
    <citation type="journal article" date="2007" name="Proc. Natl. Acad. Sci. U.S.A.">
        <title>Analysis of phosphorylation sites on proteins from Saccharomyces cerevisiae by electron transfer dissociation (ETD) mass spectrometry.</title>
        <authorList>
            <person name="Chi A."/>
            <person name="Huttenhower C."/>
            <person name="Geer L.Y."/>
            <person name="Coon J.J."/>
            <person name="Syka J.E.P."/>
            <person name="Bai D.L."/>
            <person name="Shabanowitz J."/>
            <person name="Burke D.J."/>
            <person name="Troyanskaya O.G."/>
            <person name="Hunt D.F."/>
        </authorList>
    </citation>
    <scope>PHOSPHORYLATION [LARGE SCALE ANALYSIS] AT SER-65 AND SER-68</scope>
    <scope>IDENTIFICATION BY MASS SPECTROMETRY [LARGE SCALE ANALYSIS]</scope>
</reference>
<reference key="10">
    <citation type="journal article" date="2008" name="Mol. Cell. Proteomics">
        <title>A multidimensional chromatography technology for in-depth phosphoproteome analysis.</title>
        <authorList>
            <person name="Albuquerque C.P."/>
            <person name="Smolka M.B."/>
            <person name="Payne S.H."/>
            <person name="Bafna V."/>
            <person name="Eng J."/>
            <person name="Zhou H."/>
        </authorList>
    </citation>
    <scope>PHOSPHORYLATION [LARGE SCALE ANALYSIS] AT THR-320</scope>
    <scope>IDENTIFICATION BY MASS SPECTROMETRY [LARGE SCALE ANALYSIS]</scope>
</reference>
<reference key="11">
    <citation type="journal article" date="2009" name="Science">
        <title>Global analysis of Cdk1 substrate phosphorylation sites provides insights into evolution.</title>
        <authorList>
            <person name="Holt L.J."/>
            <person name="Tuch B.B."/>
            <person name="Villen J."/>
            <person name="Johnson A.D."/>
            <person name="Gygi S.P."/>
            <person name="Morgan D.O."/>
        </authorList>
    </citation>
    <scope>PHOSPHORYLATION [LARGE SCALE ANALYSIS] AT THR-320</scope>
    <scope>IDENTIFICATION BY MASS SPECTROMETRY [LARGE SCALE ANALYSIS]</scope>
</reference>
<dbReference type="EMBL" id="U43608">
    <property type="protein sequence ID" value="AAB49320.1"/>
    <property type="molecule type" value="Genomic_DNA"/>
</dbReference>
<dbReference type="EMBL" id="Z71649">
    <property type="protein sequence ID" value="CAA96314.1"/>
    <property type="molecule type" value="Genomic_DNA"/>
</dbReference>
<dbReference type="EMBL" id="BK006947">
    <property type="protein sequence ID" value="DAA10575.1"/>
    <property type="molecule type" value="Genomic_DNA"/>
</dbReference>
<dbReference type="PIR" id="S62015">
    <property type="entry name" value="S62015"/>
</dbReference>
<dbReference type="RefSeq" id="NP_014432.3">
    <property type="nucleotide sequence ID" value="NM_001183211.3"/>
</dbReference>
<dbReference type="SMR" id="P50278"/>
<dbReference type="BioGRID" id="35859">
    <property type="interactions" value="101"/>
</dbReference>
<dbReference type="DIP" id="DIP-962N"/>
<dbReference type="FunCoup" id="P50278">
    <property type="interactions" value="326"/>
</dbReference>
<dbReference type="IntAct" id="P50278">
    <property type="interactions" value="27"/>
</dbReference>
<dbReference type="MINT" id="P50278"/>
<dbReference type="STRING" id="4932.YNR034W"/>
<dbReference type="iPTMnet" id="P50278"/>
<dbReference type="PaxDb" id="4932-YNR034W"/>
<dbReference type="PeptideAtlas" id="P50278"/>
<dbReference type="EnsemblFungi" id="YNR034W_mRNA">
    <property type="protein sequence ID" value="YNR034W"/>
    <property type="gene ID" value="YNR034W"/>
</dbReference>
<dbReference type="GeneID" id="855769"/>
<dbReference type="KEGG" id="sce:YNR034W"/>
<dbReference type="AGR" id="SGD:S000005317"/>
<dbReference type="SGD" id="S000005317">
    <property type="gene designation" value="SOL1"/>
</dbReference>
<dbReference type="VEuPathDB" id="FungiDB:YNR034W"/>
<dbReference type="eggNOG" id="KOG3147">
    <property type="taxonomic scope" value="Eukaryota"/>
</dbReference>
<dbReference type="GeneTree" id="ENSGT00550000075110"/>
<dbReference type="HOGENOM" id="CLU_053947_0_1_1"/>
<dbReference type="InParanoid" id="P50278"/>
<dbReference type="OMA" id="KLAWCLP"/>
<dbReference type="OrthoDB" id="432544at2759"/>
<dbReference type="BioCyc" id="YEAST:G3O-33344-MONOMER"/>
<dbReference type="BioGRID-ORCS" id="855769">
    <property type="hits" value="9 hits in 10 CRISPR screens"/>
</dbReference>
<dbReference type="PRO" id="PR:P50278"/>
<dbReference type="Proteomes" id="UP000002311">
    <property type="component" value="Chromosome XIV"/>
</dbReference>
<dbReference type="RNAct" id="P50278">
    <property type="molecule type" value="protein"/>
</dbReference>
<dbReference type="GO" id="GO:0005737">
    <property type="term" value="C:cytoplasm"/>
    <property type="evidence" value="ECO:0007005"/>
    <property type="project" value="SGD"/>
</dbReference>
<dbReference type="GO" id="GO:0005829">
    <property type="term" value="C:cytosol"/>
    <property type="evidence" value="ECO:0000318"/>
    <property type="project" value="GO_Central"/>
</dbReference>
<dbReference type="GO" id="GO:0005634">
    <property type="term" value="C:nucleus"/>
    <property type="evidence" value="ECO:0000314"/>
    <property type="project" value="SGD"/>
</dbReference>
<dbReference type="GO" id="GO:0017057">
    <property type="term" value="F:6-phosphogluconolactonase activity"/>
    <property type="evidence" value="ECO:0007669"/>
    <property type="project" value="InterPro"/>
</dbReference>
<dbReference type="GO" id="GO:0005975">
    <property type="term" value="P:carbohydrate metabolic process"/>
    <property type="evidence" value="ECO:0007669"/>
    <property type="project" value="InterPro"/>
</dbReference>
<dbReference type="GO" id="GO:0009051">
    <property type="term" value="P:pentose-phosphate shunt, oxidative branch"/>
    <property type="evidence" value="ECO:0000318"/>
    <property type="project" value="GO_Central"/>
</dbReference>
<dbReference type="GO" id="GO:0006409">
    <property type="term" value="P:tRNA export from nucleus"/>
    <property type="evidence" value="ECO:0000315"/>
    <property type="project" value="SGD"/>
</dbReference>
<dbReference type="CDD" id="cd01400">
    <property type="entry name" value="6PGL"/>
    <property type="match status" value="1"/>
</dbReference>
<dbReference type="FunFam" id="3.40.50.1360:FF:000017">
    <property type="entry name" value="6-phosphogluconolactonase-like protein"/>
    <property type="match status" value="1"/>
</dbReference>
<dbReference type="Gene3D" id="3.40.50.1360">
    <property type="match status" value="1"/>
</dbReference>
<dbReference type="InterPro" id="IPR005900">
    <property type="entry name" value="6-phosphogluconolactonase_DevB"/>
</dbReference>
<dbReference type="InterPro" id="IPR006148">
    <property type="entry name" value="Glc/Gal-6P_isomerase"/>
</dbReference>
<dbReference type="InterPro" id="IPR037171">
    <property type="entry name" value="NagB/RpiA_transferase-like"/>
</dbReference>
<dbReference type="InterPro" id="IPR039104">
    <property type="entry name" value="PGLS"/>
</dbReference>
<dbReference type="NCBIfam" id="TIGR01198">
    <property type="entry name" value="pgl"/>
    <property type="match status" value="1"/>
</dbReference>
<dbReference type="PANTHER" id="PTHR11054">
    <property type="entry name" value="6-PHOSPHOGLUCONOLACTONASE"/>
    <property type="match status" value="1"/>
</dbReference>
<dbReference type="PANTHER" id="PTHR11054:SF0">
    <property type="entry name" value="6-PHOSPHOGLUCONOLACTONASE"/>
    <property type="match status" value="1"/>
</dbReference>
<dbReference type="Pfam" id="PF01182">
    <property type="entry name" value="Glucosamine_iso"/>
    <property type="match status" value="1"/>
</dbReference>
<dbReference type="SUPFAM" id="SSF100950">
    <property type="entry name" value="NagB/RpiA/CoA transferase-like"/>
    <property type="match status" value="1"/>
</dbReference>
<comment type="function">
    <text evidence="3">May be involved in regulation of tRNA subcellular distribution.</text>
</comment>
<comment type="interaction">
    <interactant intactId="EBI-17675">
        <id>P50278</id>
    </interactant>
    <interactant intactId="EBI-14223">
        <id>P38009</id>
        <label>ADE17</label>
    </interactant>
    <organismsDiffer>false</organismsDiffer>
    <experiments>2</experiments>
</comment>
<comment type="interaction">
    <interactant intactId="EBI-17675">
        <id>P50278</id>
    </interactant>
    <interactant intactId="EBI-13715">
        <id>P32598</id>
        <label>GLC7</label>
    </interactant>
    <organismsDiffer>false</organismsDiffer>
    <experiments>3</experiments>
</comment>
<comment type="subcellular location">
    <subcellularLocation>
        <location>Cytoplasm</location>
    </subcellularLocation>
    <subcellularLocation>
        <location>Nucleus</location>
    </subcellularLocation>
</comment>
<comment type="miscellaneous">
    <text evidence="2">Present with 1970 molecules/cell in log phase SD medium.</text>
</comment>
<comment type="similarity">
    <text evidence="4">Belongs to the glucosamine/galactosamine-6-phosphate isomerase family. 6-phosphogluconolactonase subfamily.</text>
</comment>
<comment type="caution">
    <text evidence="4">Lacks 6-phosphogluconolactonase activity.</text>
</comment>
<sequence>MTTTVPKVFAFHEFAGVAEAVADHVIHAQNSALKKGKVSRSTQMSGTSLNGNGNTESKTMERVNSVRSNASSRGGSEDGATKKLKKEKERRFKIALSGGSLIQVLHEGLLKRDDVQWGKWDIYFADERLVPFSSSESNYGLAKRKIFDLIDTEKYGTPKIYHIDESLINDPQECADNYEKILIKGFAGRDSVKLPMFDLFLLGCAPDGHIASLFPNFQENLRENLAWVIPVENAPSGPSNRISLTIPVICHSHRVTFVVEGATKAPVIKTIMERPEKGLPSSIVNEGAAGRVSWFVDDDALKDVFVIKKKYKFYDDENLTE</sequence>
<protein>
    <recommendedName>
        <fullName>6-phosphogluconolactonase-like protein 1</fullName>
    </recommendedName>
</protein>